<feature type="signal peptide" evidence="1">
    <location>
        <begin position="1"/>
        <end position="20"/>
    </location>
</feature>
<feature type="chain" id="PRO_0000000309" description="Acetylcholine receptor subunit alpha">
    <location>
        <begin position="21"/>
        <end position="456"/>
    </location>
</feature>
<feature type="topological domain" description="Extracellular" evidence="4">
    <location>
        <begin position="21"/>
        <end position="230"/>
    </location>
</feature>
<feature type="transmembrane region" description="Helical" evidence="4">
    <location>
        <begin position="231"/>
        <end position="255"/>
    </location>
</feature>
<feature type="transmembrane region" description="Helical" evidence="4">
    <location>
        <begin position="263"/>
        <end position="281"/>
    </location>
</feature>
<feature type="transmembrane region" description="Helical" evidence="4">
    <location>
        <begin position="297"/>
        <end position="316"/>
    </location>
</feature>
<feature type="topological domain" description="Cytoplasmic" evidence="4">
    <location>
        <begin position="317"/>
        <end position="428"/>
    </location>
</feature>
<feature type="transmembrane region" description="Helical" evidence="4">
    <location>
        <begin position="429"/>
        <end position="447"/>
    </location>
</feature>
<feature type="glycosylation site" description="N-linked (GlcNAc...) asparagine" evidence="4">
    <location>
        <position position="161"/>
    </location>
</feature>
<feature type="disulfide bond" evidence="1">
    <location>
        <begin position="148"/>
        <end position="162"/>
    </location>
</feature>
<feature type="disulfide bond" description="Associated with receptor activation" evidence="1">
    <location>
        <begin position="212"/>
        <end position="213"/>
    </location>
</feature>
<accession>Q98880</accession>
<evidence type="ECO:0000250" key="1"/>
<evidence type="ECO:0000250" key="2">
    <source>
        <dbReference type="UniProtKB" id="P02708"/>
    </source>
</evidence>
<evidence type="ECO:0000250" key="3">
    <source>
        <dbReference type="UniProtKB" id="P02709"/>
    </source>
</evidence>
<evidence type="ECO:0000255" key="4"/>
<evidence type="ECO:0000305" key="5"/>
<sequence>MNYFILILPILPYLYGPAVCSEDETRLVKTLFTGYNKVVRPVSHFKDPVVVTVGLQLIQLISVDEVNQIVTSNVRLKQQWKDVHLQWNPDDYGGIRKIRIPSTDLWKPDLVLYNNADGDFAIVHETKVLLEHTGMITWTPPAIFKSYCEIVVLHFPFDLQNCSMKLGTWTYDGNLVIINPDSDRPDLSNFMESGEWVMKDYRSWKHWVYYACCPDTPYLDITYHFLLLRLPLYFIVNVIIPCMLFSFLTGLVFYLPTDSGEKMTLSISVLLSLTVFLLVIVELIPSTSSAVPLIGKYMLFTMIFVIASIIITVIVINTHHRSPSTHIMPAWVRKIFIDTIPNMMFFSTMKRPSQERQEKRLFPADFDISDISGKPMPASVTYHSPITKNPDVRSAIEGVKYIADTMKSDEESNNAAEEWKFVAMVLDHILLCVFMAVCIIGTLGVFAGRLIELSML</sequence>
<reference key="1">
    <citation type="journal article" date="1998" name="Genetics">
        <title>An altered intron inhibits synthesis of the acetylcholine receptor alpha-subunit in the paralyzed zebrafish mutant nic1.</title>
        <authorList>
            <person name="Sepich D.S."/>
            <person name="Wegner J."/>
            <person name="O'Shea S."/>
            <person name="Westerfield M."/>
        </authorList>
    </citation>
    <scope>NUCLEOTIDE SEQUENCE [GENOMIC DNA / MRNA]</scope>
</reference>
<reference key="2">
    <citation type="submission" date="2004-09" db="EMBL/GenBank/DDBJ databases">
        <authorList>
            <consortium name="NIH - Zebrafish Gene Collection (ZGC) project"/>
        </authorList>
    </citation>
    <scope>NUCLEOTIDE SEQUENCE [LARGE SCALE MRNA]</scope>
    <source>
        <tissue>Embryo</tissue>
    </source>
</reference>
<protein>
    <recommendedName>
        <fullName>Acetylcholine receptor subunit alpha</fullName>
    </recommendedName>
</protein>
<organism>
    <name type="scientific">Danio rerio</name>
    <name type="common">Zebrafish</name>
    <name type="synonym">Brachydanio rerio</name>
    <dbReference type="NCBI Taxonomy" id="7955"/>
    <lineage>
        <taxon>Eukaryota</taxon>
        <taxon>Metazoa</taxon>
        <taxon>Chordata</taxon>
        <taxon>Craniata</taxon>
        <taxon>Vertebrata</taxon>
        <taxon>Euteleostomi</taxon>
        <taxon>Actinopterygii</taxon>
        <taxon>Neopterygii</taxon>
        <taxon>Teleostei</taxon>
        <taxon>Ostariophysi</taxon>
        <taxon>Cypriniformes</taxon>
        <taxon>Danionidae</taxon>
        <taxon>Danioninae</taxon>
        <taxon>Danio</taxon>
    </lineage>
</organism>
<proteinExistence type="evidence at transcript level"/>
<comment type="function">
    <text evidence="2">Upon acetylcholine binding, the AChR responds by an extensive change in conformation that affects all subunits and leads to opening of an ion-conducting channel across the plasma membrane.</text>
</comment>
<comment type="catalytic activity">
    <reaction evidence="3">
        <text>K(+)(in) = K(+)(out)</text>
        <dbReference type="Rhea" id="RHEA:29463"/>
        <dbReference type="ChEBI" id="CHEBI:29103"/>
    </reaction>
</comment>
<comment type="catalytic activity">
    <reaction evidence="3">
        <text>Na(+)(in) = Na(+)(out)</text>
        <dbReference type="Rhea" id="RHEA:34963"/>
        <dbReference type="ChEBI" id="CHEBI:29101"/>
    </reaction>
</comment>
<comment type="subunit">
    <text evidence="2">One of the alpha chains that assemble within the acetylcholine receptor, a pentamer of two alpha chains, a beta, a delta, and a gamma or epsilon chains.</text>
</comment>
<comment type="subcellular location">
    <subcellularLocation>
        <location evidence="2">Postsynaptic cell membrane</location>
        <topology evidence="4">Multi-pass membrane protein</topology>
    </subcellularLocation>
    <subcellularLocation>
        <location evidence="2">Cell membrane</location>
        <topology evidence="4">Multi-pass membrane protein</topology>
    </subcellularLocation>
</comment>
<comment type="similarity">
    <text evidence="5">Belongs to the ligand-gated ion channel (TC 1.A.9) family. Acetylcholine receptor (TC 1.A.9.1) subfamily. Alpha-1/CHRNA1 sub-subfamily.</text>
</comment>
<name>ACHA_DANRE</name>
<keyword id="KW-1003">Cell membrane</keyword>
<keyword id="KW-1015">Disulfide bond</keyword>
<keyword id="KW-0325">Glycoprotein</keyword>
<keyword id="KW-0407">Ion channel</keyword>
<keyword id="KW-0406">Ion transport</keyword>
<keyword id="KW-1071">Ligand-gated ion channel</keyword>
<keyword id="KW-0472">Membrane</keyword>
<keyword id="KW-0628">Postsynaptic cell membrane</keyword>
<keyword id="KW-0675">Receptor</keyword>
<keyword id="KW-1185">Reference proteome</keyword>
<keyword id="KW-0732">Signal</keyword>
<keyword id="KW-0770">Synapse</keyword>
<keyword id="KW-0812">Transmembrane</keyword>
<keyword id="KW-1133">Transmembrane helix</keyword>
<keyword id="KW-0813">Transport</keyword>
<gene>
    <name type="primary">chrna1</name>
    <name type="synonym">nic1</name>
</gene>
<dbReference type="EMBL" id="AH003668">
    <property type="protein sequence ID" value="AAB09701.1"/>
    <property type="molecule type" value="Genomic_DNA"/>
</dbReference>
<dbReference type="EMBL" id="U70437">
    <property type="protein sequence ID" value="AAB09770.1"/>
    <property type="molecule type" value="Genomic_DNA"/>
</dbReference>
<dbReference type="EMBL" id="U70438">
    <property type="protein sequence ID" value="AAB16917.1"/>
    <property type="molecule type" value="mRNA"/>
</dbReference>
<dbReference type="EMBL" id="BC081554">
    <property type="protein sequence ID" value="AAH81554.1"/>
    <property type="molecule type" value="mRNA"/>
</dbReference>
<dbReference type="RefSeq" id="NP_571520.1">
    <property type="nucleotide sequence ID" value="NM_131445.1"/>
</dbReference>
<dbReference type="SMR" id="Q98880"/>
<dbReference type="FunCoup" id="Q98880">
    <property type="interactions" value="394"/>
</dbReference>
<dbReference type="STRING" id="7955.ENSDARP00000021860"/>
<dbReference type="GlyCosmos" id="Q98880">
    <property type="glycosylation" value="1 site, No reported glycans"/>
</dbReference>
<dbReference type="PaxDb" id="7955-ENSDARP00000021860"/>
<dbReference type="Ensembl" id="ENSDART00000020261">
    <property type="protein sequence ID" value="ENSDARP00000021860"/>
    <property type="gene ID" value="ENSDARG00000009021"/>
</dbReference>
<dbReference type="GeneID" id="30725"/>
<dbReference type="KEGG" id="dre:30725"/>
<dbReference type="AGR" id="ZFIN:ZDB-GENE-980526-137"/>
<dbReference type="CTD" id="1134"/>
<dbReference type="ZFIN" id="ZDB-GENE-980526-137">
    <property type="gene designation" value="chrna1"/>
</dbReference>
<dbReference type="eggNOG" id="KOG3645">
    <property type="taxonomic scope" value="Eukaryota"/>
</dbReference>
<dbReference type="HOGENOM" id="CLU_018074_1_0_1"/>
<dbReference type="InParanoid" id="Q98880"/>
<dbReference type="OMA" id="MMKVHCV"/>
<dbReference type="OrthoDB" id="5975154at2759"/>
<dbReference type="PhylomeDB" id="Q98880"/>
<dbReference type="TreeFam" id="TF315605"/>
<dbReference type="Reactome" id="R-DRE-629594">
    <property type="pathway name" value="Highly calcium permeable postsynaptic nicotinic acetylcholine receptors"/>
</dbReference>
<dbReference type="Reactome" id="R-DRE-629597">
    <property type="pathway name" value="Highly calcium permeable nicotinic acetylcholine receptors"/>
</dbReference>
<dbReference type="PRO" id="PR:Q98880"/>
<dbReference type="Proteomes" id="UP000000437">
    <property type="component" value="Chromosome 6"/>
</dbReference>
<dbReference type="Bgee" id="ENSDARG00000009021">
    <property type="expression patterns" value="Expressed in muscle tissue and 23 other cell types or tissues"/>
</dbReference>
<dbReference type="ExpressionAtlas" id="Q98880">
    <property type="expression patterns" value="baseline"/>
</dbReference>
<dbReference type="GO" id="GO:0005892">
    <property type="term" value="C:acetylcholine-gated channel complex"/>
    <property type="evidence" value="ECO:0000314"/>
    <property type="project" value="ZFIN"/>
</dbReference>
<dbReference type="GO" id="GO:0043005">
    <property type="term" value="C:neuron projection"/>
    <property type="evidence" value="ECO:0000318"/>
    <property type="project" value="GO_Central"/>
</dbReference>
<dbReference type="GO" id="GO:0005886">
    <property type="term" value="C:plasma membrane"/>
    <property type="evidence" value="ECO:0000318"/>
    <property type="project" value="GO_Central"/>
</dbReference>
<dbReference type="GO" id="GO:0045211">
    <property type="term" value="C:postsynaptic membrane"/>
    <property type="evidence" value="ECO:0007669"/>
    <property type="project" value="UniProtKB-SubCell"/>
</dbReference>
<dbReference type="GO" id="GO:0045202">
    <property type="term" value="C:synapse"/>
    <property type="evidence" value="ECO:0000318"/>
    <property type="project" value="GO_Central"/>
</dbReference>
<dbReference type="GO" id="GO:0022848">
    <property type="term" value="F:acetylcholine-gated monoatomic cation-selective channel activity"/>
    <property type="evidence" value="ECO:0000318"/>
    <property type="project" value="GO_Central"/>
</dbReference>
<dbReference type="GO" id="GO:0005261">
    <property type="term" value="F:monoatomic cation channel activity"/>
    <property type="evidence" value="ECO:0000314"/>
    <property type="project" value="ZFIN"/>
</dbReference>
<dbReference type="GO" id="GO:0004888">
    <property type="term" value="F:transmembrane signaling receptor activity"/>
    <property type="evidence" value="ECO:0007669"/>
    <property type="project" value="InterPro"/>
</dbReference>
<dbReference type="GO" id="GO:0095500">
    <property type="term" value="P:acetylcholine receptor signaling pathway"/>
    <property type="evidence" value="ECO:0000318"/>
    <property type="project" value="GO_Central"/>
</dbReference>
<dbReference type="GO" id="GO:0003428">
    <property type="term" value="P:chondrocyte intercalation involved in growth plate cartilage morphogenesis"/>
    <property type="evidence" value="ECO:0000315"/>
    <property type="project" value="ZFIN"/>
</dbReference>
<dbReference type="GO" id="GO:0051899">
    <property type="term" value="P:membrane depolarization"/>
    <property type="evidence" value="ECO:0000318"/>
    <property type="project" value="GO_Central"/>
</dbReference>
<dbReference type="GO" id="GO:0086009">
    <property type="term" value="P:membrane repolarization"/>
    <property type="evidence" value="ECO:0000315"/>
    <property type="project" value="ZFIN"/>
</dbReference>
<dbReference type="GO" id="GO:0034220">
    <property type="term" value="P:monoatomic ion transmembrane transport"/>
    <property type="evidence" value="ECO:0000318"/>
    <property type="project" value="GO_Central"/>
</dbReference>
<dbReference type="GO" id="GO:0008045">
    <property type="term" value="P:motor neuron axon guidance"/>
    <property type="evidence" value="ECO:0000315"/>
    <property type="project" value="ZFIN"/>
</dbReference>
<dbReference type="GO" id="GO:0007274">
    <property type="term" value="P:neuromuscular synaptic transmission"/>
    <property type="evidence" value="ECO:0000314"/>
    <property type="project" value="ZFIN"/>
</dbReference>
<dbReference type="GO" id="GO:0043113">
    <property type="term" value="P:receptor clustering"/>
    <property type="evidence" value="ECO:0000315"/>
    <property type="project" value="ZFIN"/>
</dbReference>
<dbReference type="GO" id="GO:0030516">
    <property type="term" value="P:regulation of axon extension"/>
    <property type="evidence" value="ECO:0000315"/>
    <property type="project" value="ZFIN"/>
</dbReference>
<dbReference type="GO" id="GO:0035094">
    <property type="term" value="P:response to nicotine"/>
    <property type="evidence" value="ECO:0000318"/>
    <property type="project" value="GO_Central"/>
</dbReference>
<dbReference type="GO" id="GO:0048741">
    <property type="term" value="P:skeletal muscle fiber development"/>
    <property type="evidence" value="ECO:0000315"/>
    <property type="project" value="ZFIN"/>
</dbReference>
<dbReference type="GO" id="GO:0048705">
    <property type="term" value="P:skeletal system morphogenesis"/>
    <property type="evidence" value="ECO:0000315"/>
    <property type="project" value="ZFIN"/>
</dbReference>
<dbReference type="GO" id="GO:0007271">
    <property type="term" value="P:synaptic transmission, cholinergic"/>
    <property type="evidence" value="ECO:0000314"/>
    <property type="project" value="ZFIN"/>
</dbReference>
<dbReference type="CDD" id="cd19014">
    <property type="entry name" value="LGIC_ECD_nAChR_A1"/>
    <property type="match status" value="1"/>
</dbReference>
<dbReference type="CDD" id="cd19064">
    <property type="entry name" value="LGIC_TM_nAChR"/>
    <property type="match status" value="1"/>
</dbReference>
<dbReference type="FunFam" id="1.20.58.390:FF:000013">
    <property type="entry name" value="Putative acetylcholine receptor subunit alpha"/>
    <property type="match status" value="1"/>
</dbReference>
<dbReference type="FunFam" id="1.20.58.390:FF:000016">
    <property type="entry name" value="Putative acetylcholine receptor subunit alpha"/>
    <property type="match status" value="1"/>
</dbReference>
<dbReference type="FunFam" id="2.70.170.10:FF:000019">
    <property type="entry name" value="Putative acetylcholine receptor subunit alpha"/>
    <property type="match status" value="1"/>
</dbReference>
<dbReference type="Gene3D" id="2.70.170.10">
    <property type="entry name" value="Neurotransmitter-gated ion-channel ligand-binding domain"/>
    <property type="match status" value="1"/>
</dbReference>
<dbReference type="Gene3D" id="1.20.58.390">
    <property type="entry name" value="Neurotransmitter-gated ion-channel transmembrane domain"/>
    <property type="match status" value="2"/>
</dbReference>
<dbReference type="InterPro" id="IPR006202">
    <property type="entry name" value="Neur_chan_lig-bd"/>
</dbReference>
<dbReference type="InterPro" id="IPR036734">
    <property type="entry name" value="Neur_chan_lig-bd_sf"/>
</dbReference>
<dbReference type="InterPro" id="IPR006201">
    <property type="entry name" value="Neur_channel"/>
</dbReference>
<dbReference type="InterPro" id="IPR036719">
    <property type="entry name" value="Neuro-gated_channel_TM_sf"/>
</dbReference>
<dbReference type="InterPro" id="IPR038050">
    <property type="entry name" value="Neuro_actylchol_rec"/>
</dbReference>
<dbReference type="InterPro" id="IPR006029">
    <property type="entry name" value="Neurotrans-gated_channel_TM"/>
</dbReference>
<dbReference type="InterPro" id="IPR018000">
    <property type="entry name" value="Neurotransmitter_ion_chnl_CS"/>
</dbReference>
<dbReference type="InterPro" id="IPR002394">
    <property type="entry name" value="Nicotinic_acetylcholine_rcpt"/>
</dbReference>
<dbReference type="NCBIfam" id="TIGR00860">
    <property type="entry name" value="LIC"/>
    <property type="match status" value="1"/>
</dbReference>
<dbReference type="PANTHER" id="PTHR18945">
    <property type="entry name" value="NEUROTRANSMITTER GATED ION CHANNEL"/>
    <property type="match status" value="1"/>
</dbReference>
<dbReference type="Pfam" id="PF02931">
    <property type="entry name" value="Neur_chan_LBD"/>
    <property type="match status" value="1"/>
</dbReference>
<dbReference type="Pfam" id="PF02932">
    <property type="entry name" value="Neur_chan_memb"/>
    <property type="match status" value="1"/>
</dbReference>
<dbReference type="PRINTS" id="PR00254">
    <property type="entry name" value="NICOTINICR"/>
</dbReference>
<dbReference type="PRINTS" id="PR00252">
    <property type="entry name" value="NRIONCHANNEL"/>
</dbReference>
<dbReference type="SUPFAM" id="SSF90112">
    <property type="entry name" value="Neurotransmitter-gated ion-channel transmembrane pore"/>
    <property type="match status" value="1"/>
</dbReference>
<dbReference type="SUPFAM" id="SSF63712">
    <property type="entry name" value="Nicotinic receptor ligand binding domain-like"/>
    <property type="match status" value="1"/>
</dbReference>
<dbReference type="PROSITE" id="PS00236">
    <property type="entry name" value="NEUROTR_ION_CHANNEL"/>
    <property type="match status" value="1"/>
</dbReference>